<dbReference type="EMBL" id="L43967">
    <property type="protein sequence ID" value="AAC71631.1"/>
    <property type="molecule type" value="Genomic_DNA"/>
</dbReference>
<dbReference type="PIR" id="F64244">
    <property type="entry name" value="F64244"/>
</dbReference>
<dbReference type="RefSeq" id="WP_009885620.1">
    <property type="nucleotide sequence ID" value="NC_000908.2"/>
</dbReference>
<dbReference type="SMR" id="P47643"/>
<dbReference type="FunCoup" id="P47643">
    <property type="interactions" value="57"/>
</dbReference>
<dbReference type="STRING" id="243273.MG_403"/>
<dbReference type="GeneID" id="88282589"/>
<dbReference type="KEGG" id="mge:MG_403"/>
<dbReference type="eggNOG" id="COG0711">
    <property type="taxonomic scope" value="Bacteria"/>
</dbReference>
<dbReference type="HOGENOM" id="CLU_079215_4_3_14"/>
<dbReference type="InParanoid" id="P47643"/>
<dbReference type="OrthoDB" id="399036at2"/>
<dbReference type="BioCyc" id="MGEN243273:G1GJ2-500-MONOMER"/>
<dbReference type="Proteomes" id="UP000000807">
    <property type="component" value="Chromosome"/>
</dbReference>
<dbReference type="GO" id="GO:0005886">
    <property type="term" value="C:plasma membrane"/>
    <property type="evidence" value="ECO:0007669"/>
    <property type="project" value="UniProtKB-SubCell"/>
</dbReference>
<dbReference type="GO" id="GO:0045259">
    <property type="term" value="C:proton-transporting ATP synthase complex"/>
    <property type="evidence" value="ECO:0007669"/>
    <property type="project" value="UniProtKB-KW"/>
</dbReference>
<dbReference type="GO" id="GO:0046933">
    <property type="term" value="F:proton-transporting ATP synthase activity, rotational mechanism"/>
    <property type="evidence" value="ECO:0007669"/>
    <property type="project" value="UniProtKB-UniRule"/>
</dbReference>
<dbReference type="CDD" id="cd06503">
    <property type="entry name" value="ATP-synt_Fo_b"/>
    <property type="match status" value="1"/>
</dbReference>
<dbReference type="Gene3D" id="1.20.5.620">
    <property type="entry name" value="F1F0 ATP synthase subunit B, membrane domain"/>
    <property type="match status" value="1"/>
</dbReference>
<dbReference type="HAMAP" id="MF_01398">
    <property type="entry name" value="ATP_synth_b_bprime"/>
    <property type="match status" value="1"/>
</dbReference>
<dbReference type="InterPro" id="IPR028987">
    <property type="entry name" value="ATP_synth_B-like_membr_sf"/>
</dbReference>
<dbReference type="InterPro" id="IPR002146">
    <property type="entry name" value="ATP_synth_b/b'su_bac/chlpt"/>
</dbReference>
<dbReference type="InterPro" id="IPR005864">
    <property type="entry name" value="ATP_synth_F0_bsu_bac"/>
</dbReference>
<dbReference type="InterPro" id="IPR050059">
    <property type="entry name" value="ATP_synthase_B_chain"/>
</dbReference>
<dbReference type="NCBIfam" id="TIGR01144">
    <property type="entry name" value="ATP_synt_b"/>
    <property type="match status" value="1"/>
</dbReference>
<dbReference type="NCBIfam" id="NF004873">
    <property type="entry name" value="PRK06231.1-3"/>
    <property type="match status" value="1"/>
</dbReference>
<dbReference type="PANTHER" id="PTHR33445:SF1">
    <property type="entry name" value="ATP SYNTHASE SUBUNIT B"/>
    <property type="match status" value="1"/>
</dbReference>
<dbReference type="PANTHER" id="PTHR33445">
    <property type="entry name" value="ATP SYNTHASE SUBUNIT B', CHLOROPLASTIC"/>
    <property type="match status" value="1"/>
</dbReference>
<dbReference type="Pfam" id="PF00430">
    <property type="entry name" value="ATP-synt_B"/>
    <property type="match status" value="1"/>
</dbReference>
<dbReference type="SUPFAM" id="SSF81573">
    <property type="entry name" value="F1F0 ATP synthase subunit B, membrane domain"/>
    <property type="match status" value="1"/>
</dbReference>
<dbReference type="PROSITE" id="PS51257">
    <property type="entry name" value="PROKAR_LIPOPROTEIN"/>
    <property type="match status" value="1"/>
</dbReference>
<name>ATPF_MYCGE</name>
<keyword id="KW-0066">ATP synthesis</keyword>
<keyword id="KW-1003">Cell membrane</keyword>
<keyword id="KW-0138">CF(0)</keyword>
<keyword id="KW-0375">Hydrogen ion transport</keyword>
<keyword id="KW-0406">Ion transport</keyword>
<keyword id="KW-0449">Lipoprotein</keyword>
<keyword id="KW-0472">Membrane</keyword>
<keyword id="KW-0564">Palmitate</keyword>
<keyword id="KW-1185">Reference proteome</keyword>
<keyword id="KW-0732">Signal</keyword>
<keyword id="KW-0812">Transmembrane</keyword>
<keyword id="KW-1133">Transmembrane helix</keyword>
<keyword id="KW-0813">Transport</keyword>
<evidence type="ECO:0000250" key="1"/>
<evidence type="ECO:0000255" key="2">
    <source>
        <dbReference type="HAMAP-Rule" id="MF_01398"/>
    </source>
</evidence>
<gene>
    <name evidence="2" type="primary">atpF</name>
    <name type="ordered locus">MG403</name>
</gene>
<organism>
    <name type="scientific">Mycoplasma genitalium (strain ATCC 33530 / DSM 19775 / NCTC 10195 / G37)</name>
    <name type="common">Mycoplasmoides genitalium</name>
    <dbReference type="NCBI Taxonomy" id="243273"/>
    <lineage>
        <taxon>Bacteria</taxon>
        <taxon>Bacillati</taxon>
        <taxon>Mycoplasmatota</taxon>
        <taxon>Mycoplasmoidales</taxon>
        <taxon>Mycoplasmoidaceae</taxon>
        <taxon>Mycoplasmoides</taxon>
    </lineage>
</organism>
<protein>
    <recommendedName>
        <fullName evidence="2">ATP synthase subunit b</fullName>
    </recommendedName>
    <alternativeName>
        <fullName evidence="2">ATP synthase F(0) sector subunit b</fullName>
    </alternativeName>
    <alternativeName>
        <fullName evidence="2">ATPase subunit I</fullName>
    </alternativeName>
    <alternativeName>
        <fullName evidence="2">F-type ATPase subunit b</fullName>
        <shortName evidence="2">F-ATPase subunit b</shortName>
    </alternativeName>
</protein>
<feature type="signal peptide" evidence="1">
    <location>
        <begin position="1"/>
        <end position="27"/>
    </location>
</feature>
<feature type="chain" id="PRO_0000002631" description="ATP synthase subunit b">
    <location>
        <begin position="28"/>
        <end position="208"/>
    </location>
</feature>
<feature type="transmembrane region" description="Helical" evidence="2">
    <location>
        <begin position="49"/>
        <end position="69"/>
    </location>
</feature>
<feature type="lipid moiety-binding region" description="N-palmitoyl cysteine" evidence="1">
    <location>
        <position position="28"/>
    </location>
</feature>
<feature type="lipid moiety-binding region" description="S-diacylglycerol cysteine" evidence="1">
    <location>
        <position position="28"/>
    </location>
</feature>
<reference key="1">
    <citation type="journal article" date="1995" name="Science">
        <title>The minimal gene complement of Mycoplasma genitalium.</title>
        <authorList>
            <person name="Fraser C.M."/>
            <person name="Gocayne J.D."/>
            <person name="White O."/>
            <person name="Adams M.D."/>
            <person name="Clayton R.A."/>
            <person name="Fleischmann R.D."/>
            <person name="Bult C.J."/>
            <person name="Kerlavage A.R."/>
            <person name="Sutton G.G."/>
            <person name="Kelley J.M."/>
            <person name="Fritchman J.L."/>
            <person name="Weidman J.F."/>
            <person name="Small K.V."/>
            <person name="Sandusky M."/>
            <person name="Fuhrmann J.L."/>
            <person name="Nguyen D.T."/>
            <person name="Utterback T.R."/>
            <person name="Saudek D.M."/>
            <person name="Phillips C.A."/>
            <person name="Merrick J.M."/>
            <person name="Tomb J.-F."/>
            <person name="Dougherty B.A."/>
            <person name="Bott K.F."/>
            <person name="Hu P.-C."/>
            <person name="Lucier T.S."/>
            <person name="Peterson S.N."/>
            <person name="Smith H.O."/>
            <person name="Hutchison C.A. III"/>
            <person name="Venter J.C."/>
        </authorList>
    </citation>
    <scope>NUCLEOTIDE SEQUENCE [LARGE SCALE GENOMIC DNA]</scope>
    <source>
        <strain>ATCC 33530 / DSM 19775 / NCTC 10195 / G37</strain>
    </source>
</reference>
<comment type="function">
    <text evidence="2">F(1)F(0) ATP synthase produces ATP from ADP in the presence of a proton or sodium gradient. F-type ATPases consist of two structural domains, F(1) containing the extramembraneous catalytic core and F(0) containing the membrane proton channel, linked together by a central stalk and a peripheral stalk. During catalysis, ATP synthesis in the catalytic domain of F(1) is coupled via a rotary mechanism of the central stalk subunits to proton translocation.</text>
</comment>
<comment type="function">
    <text evidence="2">Component of the F(0) channel, it forms part of the peripheral stalk, linking F(1) to F(0).</text>
</comment>
<comment type="subunit">
    <text evidence="2">F-type ATPases have 2 components, F(1) - the catalytic core - and F(0) - the membrane proton channel. F(1) has five subunits: alpha(3), beta(3), gamma(1), delta(1), epsilon(1). F(0) has three main subunits: a(1), b(2) and c(10-14). The alpha and beta chains form an alternating ring which encloses part of the gamma chain. F(1) is attached to F(0) by a central stalk formed by the gamma and epsilon chains, while a peripheral stalk is formed by the delta and b chains.</text>
</comment>
<comment type="subcellular location">
    <subcellularLocation>
        <location evidence="2">Cell membrane</location>
        <topology evidence="2">Single-pass membrane protein</topology>
    </subcellularLocation>
</comment>
<comment type="similarity">
    <text evidence="2">Belongs to the ATPase B chain family.</text>
</comment>
<sequence>MVKAKKLVFKWSLLVFSFFTLSLFLVSCTENVREIKSSSVINELFPNFWVFITHLLAFFILLTLMIFLFWKPTQRFLNNRKNLLEAQIKQANELEKQARNLLEESNQRHEKALIVSKEIVDQANYEALQLKSEIEKTANRQANLMIFQARQEIEKERRSLKEQSIKESVELAMLAAQELILKKIDQKSDREFIDKFIRDLEANETEDD</sequence>
<accession>P47643</accession>
<proteinExistence type="inferred from homology"/>